<keyword id="KW-0021">Allosteric enzyme</keyword>
<keyword id="KW-0328">Glycosyltransferase</keyword>
<keyword id="KW-0342">GTP-binding</keyword>
<keyword id="KW-0460">Magnesium</keyword>
<keyword id="KW-0547">Nucleotide-binding</keyword>
<keyword id="KW-0808">Transferase</keyword>
<protein>
    <recommendedName>
        <fullName evidence="1">Uracil phosphoribosyltransferase</fullName>
        <ecNumber evidence="1">2.4.2.9</ecNumber>
    </recommendedName>
    <alternativeName>
        <fullName evidence="1">UMP pyrophosphorylase</fullName>
    </alternativeName>
    <alternativeName>
        <fullName evidence="1">UPRTase</fullName>
    </alternativeName>
</protein>
<comment type="function">
    <text evidence="1">Catalyzes the conversion of uracil and 5-phospho-alpha-D-ribose 1-diphosphate (PRPP) to UMP and diphosphate.</text>
</comment>
<comment type="catalytic activity">
    <reaction evidence="1">
        <text>UMP + diphosphate = 5-phospho-alpha-D-ribose 1-diphosphate + uracil</text>
        <dbReference type="Rhea" id="RHEA:13017"/>
        <dbReference type="ChEBI" id="CHEBI:17568"/>
        <dbReference type="ChEBI" id="CHEBI:33019"/>
        <dbReference type="ChEBI" id="CHEBI:57865"/>
        <dbReference type="ChEBI" id="CHEBI:58017"/>
        <dbReference type="EC" id="2.4.2.9"/>
    </reaction>
</comment>
<comment type="cofactor">
    <cofactor evidence="1">
        <name>Mg(2+)</name>
        <dbReference type="ChEBI" id="CHEBI:18420"/>
    </cofactor>
    <text evidence="1">Binds 1 Mg(2+) ion per subunit. The magnesium is bound as Mg-PRPP.</text>
</comment>
<comment type="activity regulation">
    <text evidence="1">Allosterically activated by GTP.</text>
</comment>
<comment type="pathway">
    <text evidence="1">Pyrimidine metabolism; UMP biosynthesis via salvage pathway; UMP from uracil: step 1/1.</text>
</comment>
<comment type="similarity">
    <text evidence="1">Belongs to the UPRTase family.</text>
</comment>
<evidence type="ECO:0000255" key="1">
    <source>
        <dbReference type="HAMAP-Rule" id="MF_01218"/>
    </source>
</evidence>
<sequence>MGKLYVFDHPLIQHKITYIRDKNTGTKDFRELVDEVASLMAFEITRDLPLKDIEIETPVSKATTKVIAGKKLGLIPILRAGLGMVDGILKLIPAAKVGHVGLYRDPKTLQPVEYYVKLPTDVEERDFIVLDPMLATGGSAAEAINSLKKRGAKQIKLMCIVAAPEGVKVVQEEHPDVDIYVAALDEKLNDHGYVVPGLGDAGDRLFGTK</sequence>
<feature type="chain" id="PRO_1000139096" description="Uracil phosphoribosyltransferase">
    <location>
        <begin position="1"/>
        <end position="209"/>
    </location>
</feature>
<feature type="binding site" evidence="1">
    <location>
        <position position="79"/>
    </location>
    <ligand>
        <name>5-phospho-alpha-D-ribose 1-diphosphate</name>
        <dbReference type="ChEBI" id="CHEBI:58017"/>
    </ligand>
</feature>
<feature type="binding site" evidence="1">
    <location>
        <position position="104"/>
    </location>
    <ligand>
        <name>5-phospho-alpha-D-ribose 1-diphosphate</name>
        <dbReference type="ChEBI" id="CHEBI:58017"/>
    </ligand>
</feature>
<feature type="binding site" evidence="1">
    <location>
        <begin position="131"/>
        <end position="139"/>
    </location>
    <ligand>
        <name>5-phospho-alpha-D-ribose 1-diphosphate</name>
        <dbReference type="ChEBI" id="CHEBI:58017"/>
    </ligand>
</feature>
<feature type="binding site" evidence="1">
    <location>
        <position position="194"/>
    </location>
    <ligand>
        <name>uracil</name>
        <dbReference type="ChEBI" id="CHEBI:17568"/>
    </ligand>
</feature>
<feature type="binding site" evidence="1">
    <location>
        <begin position="199"/>
        <end position="201"/>
    </location>
    <ligand>
        <name>uracil</name>
        <dbReference type="ChEBI" id="CHEBI:17568"/>
    </ligand>
</feature>
<feature type="binding site" evidence="1">
    <location>
        <position position="200"/>
    </location>
    <ligand>
        <name>5-phospho-alpha-D-ribose 1-diphosphate</name>
        <dbReference type="ChEBI" id="CHEBI:58017"/>
    </ligand>
</feature>
<dbReference type="EC" id="2.4.2.9" evidence="1"/>
<dbReference type="EMBL" id="CP001177">
    <property type="protein sequence ID" value="ACJ79062.1"/>
    <property type="molecule type" value="Genomic_DNA"/>
</dbReference>
<dbReference type="SMR" id="B7HY75"/>
<dbReference type="KEGG" id="bcr:BCAH187_A5493"/>
<dbReference type="HOGENOM" id="CLU_067096_2_2_9"/>
<dbReference type="UniPathway" id="UPA00574">
    <property type="reaction ID" value="UER00636"/>
</dbReference>
<dbReference type="Proteomes" id="UP000002214">
    <property type="component" value="Chromosome"/>
</dbReference>
<dbReference type="GO" id="GO:0005525">
    <property type="term" value="F:GTP binding"/>
    <property type="evidence" value="ECO:0007669"/>
    <property type="project" value="UniProtKB-KW"/>
</dbReference>
<dbReference type="GO" id="GO:0000287">
    <property type="term" value="F:magnesium ion binding"/>
    <property type="evidence" value="ECO:0007669"/>
    <property type="project" value="UniProtKB-UniRule"/>
</dbReference>
<dbReference type="GO" id="GO:0004845">
    <property type="term" value="F:uracil phosphoribosyltransferase activity"/>
    <property type="evidence" value="ECO:0007669"/>
    <property type="project" value="UniProtKB-UniRule"/>
</dbReference>
<dbReference type="GO" id="GO:0044206">
    <property type="term" value="P:UMP salvage"/>
    <property type="evidence" value="ECO:0007669"/>
    <property type="project" value="UniProtKB-UniRule"/>
</dbReference>
<dbReference type="GO" id="GO:0006223">
    <property type="term" value="P:uracil salvage"/>
    <property type="evidence" value="ECO:0007669"/>
    <property type="project" value="InterPro"/>
</dbReference>
<dbReference type="CDD" id="cd06223">
    <property type="entry name" value="PRTases_typeI"/>
    <property type="match status" value="1"/>
</dbReference>
<dbReference type="FunFam" id="3.40.50.2020:FF:000003">
    <property type="entry name" value="Uracil phosphoribosyltransferase"/>
    <property type="match status" value="1"/>
</dbReference>
<dbReference type="Gene3D" id="3.40.50.2020">
    <property type="match status" value="1"/>
</dbReference>
<dbReference type="HAMAP" id="MF_01218_B">
    <property type="entry name" value="Upp_B"/>
    <property type="match status" value="1"/>
</dbReference>
<dbReference type="InterPro" id="IPR000836">
    <property type="entry name" value="PRibTrfase_dom"/>
</dbReference>
<dbReference type="InterPro" id="IPR029057">
    <property type="entry name" value="PRTase-like"/>
</dbReference>
<dbReference type="InterPro" id="IPR034332">
    <property type="entry name" value="Upp_B"/>
</dbReference>
<dbReference type="InterPro" id="IPR050054">
    <property type="entry name" value="UPRTase/APRTase"/>
</dbReference>
<dbReference type="InterPro" id="IPR005765">
    <property type="entry name" value="Ura_phspho_trans"/>
</dbReference>
<dbReference type="NCBIfam" id="NF001097">
    <property type="entry name" value="PRK00129.1"/>
    <property type="match status" value="1"/>
</dbReference>
<dbReference type="NCBIfam" id="TIGR01091">
    <property type="entry name" value="upp"/>
    <property type="match status" value="1"/>
</dbReference>
<dbReference type="PANTHER" id="PTHR32315">
    <property type="entry name" value="ADENINE PHOSPHORIBOSYLTRANSFERASE"/>
    <property type="match status" value="1"/>
</dbReference>
<dbReference type="PANTHER" id="PTHR32315:SF4">
    <property type="entry name" value="URACIL PHOSPHORIBOSYLTRANSFERASE, CHLOROPLASTIC"/>
    <property type="match status" value="1"/>
</dbReference>
<dbReference type="Pfam" id="PF14681">
    <property type="entry name" value="UPRTase"/>
    <property type="match status" value="1"/>
</dbReference>
<dbReference type="SUPFAM" id="SSF53271">
    <property type="entry name" value="PRTase-like"/>
    <property type="match status" value="1"/>
</dbReference>
<proteinExistence type="inferred from homology"/>
<organism>
    <name type="scientific">Bacillus cereus (strain AH187)</name>
    <dbReference type="NCBI Taxonomy" id="405534"/>
    <lineage>
        <taxon>Bacteria</taxon>
        <taxon>Bacillati</taxon>
        <taxon>Bacillota</taxon>
        <taxon>Bacilli</taxon>
        <taxon>Bacillales</taxon>
        <taxon>Bacillaceae</taxon>
        <taxon>Bacillus</taxon>
        <taxon>Bacillus cereus group</taxon>
    </lineage>
</organism>
<gene>
    <name evidence="1" type="primary">upp</name>
    <name type="ordered locus">BCAH187_A5493</name>
</gene>
<name>UPP_BACC7</name>
<accession>B7HY75</accession>
<reference key="1">
    <citation type="submission" date="2008-10" db="EMBL/GenBank/DDBJ databases">
        <title>Genome sequence of Bacillus cereus AH187.</title>
        <authorList>
            <person name="Dodson R.J."/>
            <person name="Durkin A.S."/>
            <person name="Rosovitz M.J."/>
            <person name="Rasko D.A."/>
            <person name="Kolsto A.B."/>
            <person name="Okstad O.A."/>
            <person name="Ravel J."/>
            <person name="Sutton G."/>
        </authorList>
    </citation>
    <scope>NUCLEOTIDE SEQUENCE [LARGE SCALE GENOMIC DNA]</scope>
    <source>
        <strain>AH187</strain>
    </source>
</reference>